<comment type="function">
    <text evidence="1">Involved in regulation of DNA replication.</text>
</comment>
<comment type="disruption phenotype">
    <text evidence="2">Essential for normal growth.</text>
</comment>
<comment type="similarity">
    <text evidence="1">Belongs to the CDC6/cdc18 family.</text>
</comment>
<comment type="sequence caution" evidence="3">
    <conflict type="erroneous initiation">
        <sequence resource="EMBL-CDS" id="AAG18684"/>
    </conflict>
    <text>Extended N-terminus.</text>
</comment>
<gene>
    <name type="primary">orc10</name>
    <name type="ordered locus">VNG_0045C</name>
</gene>
<reference key="1">
    <citation type="journal article" date="2000" name="Proc. Natl. Acad. Sci. U.S.A.">
        <title>Genome sequence of Halobacterium species NRC-1.</title>
        <authorList>
            <person name="Ng W.V."/>
            <person name="Kennedy S.P."/>
            <person name="Mahairas G.G."/>
            <person name="Berquist B."/>
            <person name="Pan M."/>
            <person name="Shukla H.D."/>
            <person name="Lasky S.R."/>
            <person name="Baliga N.S."/>
            <person name="Thorsson V."/>
            <person name="Sbrogna J."/>
            <person name="Swartzell S."/>
            <person name="Weir D."/>
            <person name="Hall J."/>
            <person name="Dahl T.A."/>
            <person name="Welti R."/>
            <person name="Goo Y.A."/>
            <person name="Leithauser B."/>
            <person name="Keller K."/>
            <person name="Cruz R."/>
            <person name="Danson M.J."/>
            <person name="Hough D.W."/>
            <person name="Maddocks D.G."/>
            <person name="Jablonski P.E."/>
            <person name="Krebs M.P."/>
            <person name="Angevine C.M."/>
            <person name="Dale H."/>
            <person name="Isenbarger T.A."/>
            <person name="Peck R.F."/>
            <person name="Pohlschroder M."/>
            <person name="Spudich J.L."/>
            <person name="Jung K.-H."/>
            <person name="Alam M."/>
            <person name="Freitas T."/>
            <person name="Hou S."/>
            <person name="Daniels C.J."/>
            <person name="Dennis P.P."/>
            <person name="Omer A.D."/>
            <person name="Ebhardt H."/>
            <person name="Lowe T.M."/>
            <person name="Liang P."/>
            <person name="Riley M."/>
            <person name="Hood L."/>
            <person name="DasSarma S."/>
        </authorList>
    </citation>
    <scope>NUCLEOTIDE SEQUENCE [LARGE SCALE GENOMIC DNA]</scope>
    <source>
        <strain>ATCC 700922 / JCM 11081 / NRC-1</strain>
    </source>
</reference>
<reference key="2">
    <citation type="journal article" date="2007" name="BMC Genet.">
        <title>Essential and non-essential DNA replication genes in the model halophilic Archaeon, Halobacterium sp. NRC-1.</title>
        <authorList>
            <person name="Berquist B.R."/>
            <person name="DasSarma P."/>
            <person name="DasSarma S."/>
        </authorList>
    </citation>
    <scope>DISRUPTION PHENOTYPE</scope>
    <source>
        <strain>ATCC 700922 / JCM 11081 / NRC-1</strain>
    </source>
</reference>
<accession>Q9HSW6</accession>
<protein>
    <recommendedName>
        <fullName evidence="1">ORC1-type DNA replication protein 10</fullName>
    </recommendedName>
</protein>
<feature type="chain" id="PRO_0000150996" description="ORC1-type DNA replication protein 10">
    <location>
        <begin position="1"/>
        <end position="413"/>
    </location>
</feature>
<feature type="binding site" evidence="1">
    <location>
        <begin position="63"/>
        <end position="67"/>
    </location>
    <ligand>
        <name>ATP</name>
        <dbReference type="ChEBI" id="CHEBI:30616"/>
    </ligand>
</feature>
<feature type="binding site" evidence="1">
    <location>
        <position position="211"/>
    </location>
    <ligand>
        <name>ATP</name>
        <dbReference type="ChEBI" id="CHEBI:30616"/>
    </ligand>
</feature>
<feature type="binding site" evidence="1">
    <location>
        <position position="223"/>
    </location>
    <ligand>
        <name>ATP</name>
        <dbReference type="ChEBI" id="CHEBI:30616"/>
    </ligand>
</feature>
<name>CDC6A_HALSA</name>
<sequence length="413" mass="45833">MLSMPSFERKQNIFANKDALGESYQPNKIEERDDEIEKYMDALQPVIDGWEPNNIFVYGNTGVGKTAVTDHLLDQLQTDVEAYDDVTLSVIYLNCKTLSSSYQVAVELVNKLRRPGAEISSTGYPQQSVFKKLYQELEALGGTILIVLDEVDAIGDRDDLLYELPRARSQGNLEDAKVGIIGISNDYKFQEQLDPRVQDTLCERELQFPPYDALELANILDSRTDIAIADDSLAEGVTQHCAALAARDSGSARQALDLLRLAGELAENQDADAISTDHVEAARSELERERVEEGMRELTTHGRLTLLAVVSKAAKADTPSRTRAIYDEYASLCKSAANTDDPLKQRSVHNHLSDLHMLGILSKYENRSGSRGNYYSYELDVPFESAVDAMADVLMLDAEIEKMEGLASRNGVL</sequence>
<evidence type="ECO:0000255" key="1">
    <source>
        <dbReference type="HAMAP-Rule" id="MF_01407"/>
    </source>
</evidence>
<evidence type="ECO:0000269" key="2">
    <source>
    </source>
</evidence>
<evidence type="ECO:0000305" key="3"/>
<keyword id="KW-0067">ATP-binding</keyword>
<keyword id="KW-0235">DNA replication</keyword>
<keyword id="KW-0547">Nucleotide-binding</keyword>
<keyword id="KW-1185">Reference proteome</keyword>
<dbReference type="EMBL" id="AE004437">
    <property type="protein sequence ID" value="AAG18684.1"/>
    <property type="status" value="ALT_INIT"/>
    <property type="molecule type" value="Genomic_DNA"/>
</dbReference>
<dbReference type="PIR" id="H84164">
    <property type="entry name" value="H84164"/>
</dbReference>
<dbReference type="SMR" id="Q9HSW6"/>
<dbReference type="STRING" id="64091.VNG_0045C"/>
<dbReference type="PaxDb" id="64091-VNG_0045C"/>
<dbReference type="KEGG" id="hal:VNG_0045C"/>
<dbReference type="PATRIC" id="fig|64091.14.peg.26"/>
<dbReference type="HOGENOM" id="CLU_025112_3_1_2"/>
<dbReference type="InParanoid" id="Q9HSW6"/>
<dbReference type="Proteomes" id="UP000000554">
    <property type="component" value="Chromosome"/>
</dbReference>
<dbReference type="GO" id="GO:0005524">
    <property type="term" value="F:ATP binding"/>
    <property type="evidence" value="ECO:0007669"/>
    <property type="project" value="UniProtKB-UniRule"/>
</dbReference>
<dbReference type="GO" id="GO:0016887">
    <property type="term" value="F:ATP hydrolysis activity"/>
    <property type="evidence" value="ECO:0007669"/>
    <property type="project" value="InterPro"/>
</dbReference>
<dbReference type="GO" id="GO:0006260">
    <property type="term" value="P:DNA replication"/>
    <property type="evidence" value="ECO:0007669"/>
    <property type="project" value="UniProtKB-UniRule"/>
</dbReference>
<dbReference type="CDD" id="cd08768">
    <property type="entry name" value="Cdc6_C"/>
    <property type="match status" value="1"/>
</dbReference>
<dbReference type="FunFam" id="1.10.8.60:FF:000073">
    <property type="entry name" value="ORC1-type DNA replication protein"/>
    <property type="match status" value="1"/>
</dbReference>
<dbReference type="FunFam" id="3.40.50.300:FF:000930">
    <property type="entry name" value="ORC1-type DNA replication protein"/>
    <property type="match status" value="1"/>
</dbReference>
<dbReference type="Gene3D" id="1.10.8.60">
    <property type="match status" value="1"/>
</dbReference>
<dbReference type="Gene3D" id="3.40.50.300">
    <property type="entry name" value="P-loop containing nucleotide triphosphate hydrolases"/>
    <property type="match status" value="1"/>
</dbReference>
<dbReference type="Gene3D" id="1.10.10.10">
    <property type="entry name" value="Winged helix-like DNA-binding domain superfamily/Winged helix DNA-binding domain"/>
    <property type="match status" value="1"/>
</dbReference>
<dbReference type="HAMAP" id="MF_01407">
    <property type="entry name" value="ORC1_type_DNA_replic_protein"/>
    <property type="match status" value="1"/>
</dbReference>
<dbReference type="InterPro" id="IPR003593">
    <property type="entry name" value="AAA+_ATPase"/>
</dbReference>
<dbReference type="InterPro" id="IPR049945">
    <property type="entry name" value="AAA_22"/>
</dbReference>
<dbReference type="InterPro" id="IPR015163">
    <property type="entry name" value="Cdc6_C"/>
</dbReference>
<dbReference type="InterPro" id="IPR055237">
    <property type="entry name" value="Cdc6_lid"/>
</dbReference>
<dbReference type="InterPro" id="IPR050311">
    <property type="entry name" value="ORC1/CDC6"/>
</dbReference>
<dbReference type="InterPro" id="IPR014277">
    <property type="entry name" value="Orc1/Cdc6_arc"/>
</dbReference>
<dbReference type="InterPro" id="IPR027417">
    <property type="entry name" value="P-loop_NTPase"/>
</dbReference>
<dbReference type="InterPro" id="IPR036388">
    <property type="entry name" value="WH-like_DNA-bd_sf"/>
</dbReference>
<dbReference type="InterPro" id="IPR036390">
    <property type="entry name" value="WH_DNA-bd_sf"/>
</dbReference>
<dbReference type="NCBIfam" id="TIGR02928">
    <property type="entry name" value="orc1/cdc6 family replication initiation protein"/>
    <property type="match status" value="1"/>
</dbReference>
<dbReference type="PANTHER" id="PTHR10763">
    <property type="entry name" value="CELL DIVISION CONTROL PROTEIN 6-RELATED"/>
    <property type="match status" value="1"/>
</dbReference>
<dbReference type="PANTHER" id="PTHR10763:SF22">
    <property type="entry name" value="ORC1-TYPE DNA REPLICATION PROTEIN"/>
    <property type="match status" value="1"/>
</dbReference>
<dbReference type="Pfam" id="PF13401">
    <property type="entry name" value="AAA_22"/>
    <property type="match status" value="1"/>
</dbReference>
<dbReference type="Pfam" id="PF09079">
    <property type="entry name" value="Cdc6_C"/>
    <property type="match status" value="1"/>
</dbReference>
<dbReference type="Pfam" id="PF22703">
    <property type="entry name" value="Cdc6_lid"/>
    <property type="match status" value="1"/>
</dbReference>
<dbReference type="SMART" id="SM00382">
    <property type="entry name" value="AAA"/>
    <property type="match status" value="1"/>
</dbReference>
<dbReference type="SMART" id="SM01074">
    <property type="entry name" value="Cdc6_C"/>
    <property type="match status" value="1"/>
</dbReference>
<dbReference type="SUPFAM" id="SSF52540">
    <property type="entry name" value="P-loop containing nucleoside triphosphate hydrolases"/>
    <property type="match status" value="1"/>
</dbReference>
<dbReference type="SUPFAM" id="SSF46785">
    <property type="entry name" value="Winged helix' DNA-binding domain"/>
    <property type="match status" value="1"/>
</dbReference>
<proteinExistence type="inferred from homology"/>
<organism>
    <name type="scientific">Halobacterium salinarum (strain ATCC 700922 / JCM 11081 / NRC-1)</name>
    <name type="common">Halobacterium halobium</name>
    <dbReference type="NCBI Taxonomy" id="64091"/>
    <lineage>
        <taxon>Archaea</taxon>
        <taxon>Methanobacteriati</taxon>
        <taxon>Methanobacteriota</taxon>
        <taxon>Stenosarchaea group</taxon>
        <taxon>Halobacteria</taxon>
        <taxon>Halobacteriales</taxon>
        <taxon>Halobacteriaceae</taxon>
        <taxon>Halobacterium</taxon>
        <taxon>Halobacterium salinarum NRC-34001</taxon>
    </lineage>
</organism>